<comment type="function">
    <text evidence="1">Removes the formyl group from the N-terminal Met of newly synthesized proteins. Requires at least a dipeptide for an efficient rate of reaction. N-terminal L-methionine is a prerequisite for activity but the enzyme has broad specificity at other positions.</text>
</comment>
<comment type="catalytic activity">
    <reaction evidence="1">
        <text>N-terminal N-formyl-L-methionyl-[peptide] + H2O = N-terminal L-methionyl-[peptide] + formate</text>
        <dbReference type="Rhea" id="RHEA:24420"/>
        <dbReference type="Rhea" id="RHEA-COMP:10639"/>
        <dbReference type="Rhea" id="RHEA-COMP:10640"/>
        <dbReference type="ChEBI" id="CHEBI:15377"/>
        <dbReference type="ChEBI" id="CHEBI:15740"/>
        <dbReference type="ChEBI" id="CHEBI:49298"/>
        <dbReference type="ChEBI" id="CHEBI:64731"/>
        <dbReference type="EC" id="3.5.1.88"/>
    </reaction>
</comment>
<comment type="cofactor">
    <cofactor evidence="1">
        <name>Fe(2+)</name>
        <dbReference type="ChEBI" id="CHEBI:29033"/>
    </cofactor>
    <text evidence="1">Binds 1 Fe(2+) ion.</text>
</comment>
<comment type="similarity">
    <text evidence="1">Belongs to the polypeptide deformylase family.</text>
</comment>
<name>DEF_MYCLB</name>
<proteinExistence type="inferred from homology"/>
<keyword id="KW-0378">Hydrolase</keyword>
<keyword id="KW-0408">Iron</keyword>
<keyword id="KW-0479">Metal-binding</keyword>
<keyword id="KW-0648">Protein biosynthesis</keyword>
<reference key="1">
    <citation type="journal article" date="2009" name="Nat. Genet.">
        <title>Comparative genomic and phylogeographic analysis of Mycobacterium leprae.</title>
        <authorList>
            <person name="Monot M."/>
            <person name="Honore N."/>
            <person name="Garnier T."/>
            <person name="Zidane N."/>
            <person name="Sherafi D."/>
            <person name="Paniz-Mondolfi A."/>
            <person name="Matsuoka M."/>
            <person name="Taylor G.M."/>
            <person name="Donoghue H.D."/>
            <person name="Bouwman A."/>
            <person name="Mays S."/>
            <person name="Watson C."/>
            <person name="Lockwood D."/>
            <person name="Khamispour A."/>
            <person name="Dowlati Y."/>
            <person name="Jianping S."/>
            <person name="Rea T.H."/>
            <person name="Vera-Cabrera L."/>
            <person name="Stefani M.M."/>
            <person name="Banu S."/>
            <person name="Macdonald M."/>
            <person name="Sapkota B.R."/>
            <person name="Spencer J.S."/>
            <person name="Thomas J."/>
            <person name="Harshman K."/>
            <person name="Singh P."/>
            <person name="Busso P."/>
            <person name="Gattiker A."/>
            <person name="Rougemont J."/>
            <person name="Brennan P.J."/>
            <person name="Cole S.T."/>
        </authorList>
    </citation>
    <scope>NUCLEOTIDE SEQUENCE [LARGE SCALE GENOMIC DNA]</scope>
    <source>
        <strain>Br4923</strain>
    </source>
</reference>
<dbReference type="EC" id="3.5.1.88" evidence="1"/>
<dbReference type="EMBL" id="FM211192">
    <property type="protein sequence ID" value="CAR72026.1"/>
    <property type="molecule type" value="Genomic_DNA"/>
</dbReference>
<dbReference type="SMR" id="B8ZSF6"/>
<dbReference type="KEGG" id="mlb:MLBr01929"/>
<dbReference type="HOGENOM" id="CLU_061901_1_0_11"/>
<dbReference type="Proteomes" id="UP000006900">
    <property type="component" value="Chromosome"/>
</dbReference>
<dbReference type="GO" id="GO:0046872">
    <property type="term" value="F:metal ion binding"/>
    <property type="evidence" value="ECO:0007669"/>
    <property type="project" value="UniProtKB-KW"/>
</dbReference>
<dbReference type="GO" id="GO:0042586">
    <property type="term" value="F:peptide deformylase activity"/>
    <property type="evidence" value="ECO:0007669"/>
    <property type="project" value="UniProtKB-UniRule"/>
</dbReference>
<dbReference type="GO" id="GO:0043686">
    <property type="term" value="P:co-translational protein modification"/>
    <property type="evidence" value="ECO:0007669"/>
    <property type="project" value="TreeGrafter"/>
</dbReference>
<dbReference type="GO" id="GO:0006412">
    <property type="term" value="P:translation"/>
    <property type="evidence" value="ECO:0007669"/>
    <property type="project" value="UniProtKB-UniRule"/>
</dbReference>
<dbReference type="CDD" id="cd00487">
    <property type="entry name" value="Pep_deformylase"/>
    <property type="match status" value="1"/>
</dbReference>
<dbReference type="Gene3D" id="3.90.45.10">
    <property type="entry name" value="Peptide deformylase"/>
    <property type="match status" value="1"/>
</dbReference>
<dbReference type="HAMAP" id="MF_00163">
    <property type="entry name" value="Pep_deformylase"/>
    <property type="match status" value="1"/>
</dbReference>
<dbReference type="InterPro" id="IPR023635">
    <property type="entry name" value="Peptide_deformylase"/>
</dbReference>
<dbReference type="InterPro" id="IPR036821">
    <property type="entry name" value="Peptide_deformylase_sf"/>
</dbReference>
<dbReference type="NCBIfam" id="TIGR00079">
    <property type="entry name" value="pept_deformyl"/>
    <property type="match status" value="1"/>
</dbReference>
<dbReference type="NCBIfam" id="NF001159">
    <property type="entry name" value="PRK00150.1-3"/>
    <property type="match status" value="1"/>
</dbReference>
<dbReference type="NCBIfam" id="NF009483">
    <property type="entry name" value="PRK12846.1-4"/>
    <property type="match status" value="1"/>
</dbReference>
<dbReference type="PANTHER" id="PTHR10458">
    <property type="entry name" value="PEPTIDE DEFORMYLASE"/>
    <property type="match status" value="1"/>
</dbReference>
<dbReference type="PANTHER" id="PTHR10458:SF2">
    <property type="entry name" value="PEPTIDE DEFORMYLASE, MITOCHONDRIAL"/>
    <property type="match status" value="1"/>
</dbReference>
<dbReference type="Pfam" id="PF01327">
    <property type="entry name" value="Pep_deformylase"/>
    <property type="match status" value="1"/>
</dbReference>
<dbReference type="PIRSF" id="PIRSF004749">
    <property type="entry name" value="Pep_def"/>
    <property type="match status" value="1"/>
</dbReference>
<dbReference type="PRINTS" id="PR01576">
    <property type="entry name" value="PDEFORMYLASE"/>
</dbReference>
<dbReference type="SUPFAM" id="SSF56420">
    <property type="entry name" value="Peptide deformylase"/>
    <property type="match status" value="1"/>
</dbReference>
<evidence type="ECO:0000255" key="1">
    <source>
        <dbReference type="HAMAP-Rule" id="MF_00163"/>
    </source>
</evidence>
<sequence length="197" mass="21144">MAIAPIRIVGDPVLHTPTAPVQVAADGSLPANLNGLISTMYDTMDAAHGVGLAANQIGYGLRVFVYDCAEDCRQTARRRGVVINPILETSEIPETMPDPDTDNEGCLSVPGESFPIGRAQWARVTGLDADGNPVTTEGTGLFARMLQHETGHLDGFLYLDYLIGRHARSAKRAIKSRHWGVPGLSWMPGEVPDPFGP</sequence>
<gene>
    <name evidence="1" type="primary">def</name>
    <name type="ordered locus">MLBr01929</name>
</gene>
<protein>
    <recommendedName>
        <fullName evidence="1">Peptide deformylase</fullName>
        <shortName evidence="1">PDF</shortName>
        <ecNumber evidence="1">3.5.1.88</ecNumber>
    </recommendedName>
    <alternativeName>
        <fullName evidence="1">Polypeptide deformylase</fullName>
    </alternativeName>
</protein>
<organism>
    <name type="scientific">Mycobacterium leprae (strain Br4923)</name>
    <dbReference type="NCBI Taxonomy" id="561304"/>
    <lineage>
        <taxon>Bacteria</taxon>
        <taxon>Bacillati</taxon>
        <taxon>Actinomycetota</taxon>
        <taxon>Actinomycetes</taxon>
        <taxon>Mycobacteriales</taxon>
        <taxon>Mycobacteriaceae</taxon>
        <taxon>Mycobacterium</taxon>
    </lineage>
</organism>
<feature type="chain" id="PRO_1000200741" description="Peptide deformylase">
    <location>
        <begin position="1"/>
        <end position="197"/>
    </location>
</feature>
<feature type="active site" evidence="1">
    <location>
        <position position="149"/>
    </location>
</feature>
<feature type="binding site" evidence="1">
    <location>
        <position position="106"/>
    </location>
    <ligand>
        <name>Fe cation</name>
        <dbReference type="ChEBI" id="CHEBI:24875"/>
    </ligand>
</feature>
<feature type="binding site" evidence="1">
    <location>
        <position position="148"/>
    </location>
    <ligand>
        <name>Fe cation</name>
        <dbReference type="ChEBI" id="CHEBI:24875"/>
    </ligand>
</feature>
<feature type="binding site" evidence="1">
    <location>
        <position position="152"/>
    </location>
    <ligand>
        <name>Fe cation</name>
        <dbReference type="ChEBI" id="CHEBI:24875"/>
    </ligand>
</feature>
<accession>B8ZSF6</accession>